<feature type="chain" id="PRO_0000175405" description="DNA-directed RNA polymerase subunit alpha">
    <location>
        <begin position="1"/>
        <end position="314"/>
    </location>
</feature>
<feature type="region of interest" description="Alpha N-terminal domain (alpha-NTD)">
    <location>
        <begin position="1"/>
        <end position="229"/>
    </location>
</feature>
<feature type="region of interest" description="Alpha C-terminal domain (alpha-CTD)">
    <location>
        <begin position="246"/>
        <end position="314"/>
    </location>
</feature>
<feature type="strand" evidence="4">
    <location>
        <begin position="10"/>
        <end position="16"/>
    </location>
</feature>
<feature type="turn" evidence="4">
    <location>
        <begin position="17"/>
        <end position="19"/>
    </location>
</feature>
<feature type="strand" evidence="4">
    <location>
        <begin position="20"/>
        <end position="28"/>
    </location>
</feature>
<feature type="helix" evidence="4">
    <location>
        <begin position="32"/>
        <end position="47"/>
    </location>
</feature>
<feature type="strand" evidence="4">
    <location>
        <begin position="50"/>
        <end position="58"/>
    </location>
</feature>
<feature type="strand" evidence="4">
    <location>
        <begin position="63"/>
        <end position="65"/>
    </location>
</feature>
<feature type="strand" evidence="4">
    <location>
        <begin position="71"/>
        <end position="73"/>
    </location>
</feature>
<feature type="helix" evidence="4">
    <location>
        <begin position="75"/>
        <end position="82"/>
    </location>
</feature>
<feature type="strand" evidence="4">
    <location>
        <begin position="87"/>
        <end position="90"/>
    </location>
</feature>
<feature type="strand" evidence="4">
    <location>
        <begin position="96"/>
        <end position="103"/>
    </location>
</feature>
<feature type="strand" evidence="4">
    <location>
        <begin position="105"/>
        <end position="110"/>
    </location>
</feature>
<feature type="helix" evidence="4">
    <location>
        <begin position="111"/>
        <end position="113"/>
    </location>
</feature>
<feature type="strand" evidence="4">
    <location>
        <begin position="120"/>
        <end position="123"/>
    </location>
</feature>
<feature type="strand" evidence="4">
    <location>
        <begin position="128"/>
        <end position="132"/>
    </location>
</feature>
<feature type="strand" evidence="4">
    <location>
        <begin position="138"/>
        <end position="147"/>
    </location>
</feature>
<feature type="strand" evidence="4">
    <location>
        <begin position="149"/>
        <end position="151"/>
    </location>
</feature>
<feature type="turn" evidence="4">
    <location>
        <begin position="153"/>
        <end position="155"/>
    </location>
</feature>
<feature type="strand" evidence="3">
    <location>
        <begin position="160"/>
        <end position="163"/>
    </location>
</feature>
<feature type="strand" evidence="4">
    <location>
        <begin position="174"/>
        <end position="179"/>
    </location>
</feature>
<feature type="strand" evidence="4">
    <location>
        <begin position="186"/>
        <end position="190"/>
    </location>
</feature>
<feature type="strand" evidence="4">
    <location>
        <begin position="193"/>
        <end position="201"/>
    </location>
</feature>
<feature type="strand" evidence="4">
    <location>
        <begin position="203"/>
        <end position="205"/>
    </location>
</feature>
<feature type="helix" evidence="4">
    <location>
        <begin position="207"/>
        <end position="222"/>
    </location>
</feature>
<feature type="strand" evidence="4">
    <location>
        <begin position="225"/>
        <end position="227"/>
    </location>
</feature>
<feature type="strand" evidence="4">
    <location>
        <begin position="229"/>
        <end position="232"/>
    </location>
</feature>
<name>RPOA_THEAQ</name>
<proteinExistence type="evidence at protein level"/>
<evidence type="ECO:0000250" key="1"/>
<evidence type="ECO:0000305" key="2"/>
<evidence type="ECO:0007829" key="3">
    <source>
        <dbReference type="PDB" id="1YNJ"/>
    </source>
</evidence>
<evidence type="ECO:0007829" key="4">
    <source>
        <dbReference type="PDB" id="5TJG"/>
    </source>
</evidence>
<dbReference type="EC" id="2.7.7.6"/>
<dbReference type="EMBL" id="Y19222">
    <property type="protein sequence ID" value="CAB65464.2"/>
    <property type="molecule type" value="Genomic_DNA"/>
</dbReference>
<dbReference type="PDB" id="1HQM">
    <property type="method" value="X-ray"/>
    <property type="resolution" value="3.30 A"/>
    <property type="chains" value="A/B=1-314"/>
</dbReference>
<dbReference type="PDB" id="1I6V">
    <property type="method" value="X-ray"/>
    <property type="resolution" value="3.30 A"/>
    <property type="chains" value="A/B=1-314"/>
</dbReference>
<dbReference type="PDB" id="1L9U">
    <property type="method" value="X-ray"/>
    <property type="resolution" value="4.00 A"/>
    <property type="chains" value="A/B/J/K=1-314"/>
</dbReference>
<dbReference type="PDB" id="1L9Z">
    <property type="method" value="X-ray"/>
    <property type="resolution" value="6.50 A"/>
    <property type="chains" value="A/B=1-314"/>
</dbReference>
<dbReference type="PDB" id="1YNJ">
    <property type="method" value="X-ray"/>
    <property type="resolution" value="3.20 A"/>
    <property type="chains" value="A/B=1-314"/>
</dbReference>
<dbReference type="PDB" id="1YNN">
    <property type="method" value="X-ray"/>
    <property type="resolution" value="3.30 A"/>
    <property type="chains" value="A/B=1-314"/>
</dbReference>
<dbReference type="PDB" id="2GHO">
    <property type="method" value="X-ray"/>
    <property type="resolution" value="5.00 A"/>
    <property type="chains" value="A/B=1-314"/>
</dbReference>
<dbReference type="PDB" id="4XLN">
    <property type="method" value="X-ray"/>
    <property type="resolution" value="4.00 A"/>
    <property type="chains" value="A/B/G/H=1-314"/>
</dbReference>
<dbReference type="PDB" id="4XLP">
    <property type="method" value="X-ray"/>
    <property type="resolution" value="4.00 A"/>
    <property type="chains" value="A/B/G/H=1-314"/>
</dbReference>
<dbReference type="PDB" id="4XLQ">
    <property type="method" value="X-ray"/>
    <property type="resolution" value="4.60 A"/>
    <property type="chains" value="A/B/G/H=1-314"/>
</dbReference>
<dbReference type="PDB" id="4XLR">
    <property type="method" value="X-ray"/>
    <property type="resolution" value="4.30 A"/>
    <property type="chains" value="A/B/G/H=1-314"/>
</dbReference>
<dbReference type="PDB" id="4XLS">
    <property type="method" value="X-ray"/>
    <property type="resolution" value="4.01 A"/>
    <property type="chains" value="A/B/G/H=1-314"/>
</dbReference>
<dbReference type="PDB" id="5TJG">
    <property type="method" value="X-ray"/>
    <property type="resolution" value="2.60 A"/>
    <property type="chains" value="A/B=1-314"/>
</dbReference>
<dbReference type="PDBsum" id="1HQM"/>
<dbReference type="PDBsum" id="1I6V"/>
<dbReference type="PDBsum" id="1L9U"/>
<dbReference type="PDBsum" id="1L9Z"/>
<dbReference type="PDBsum" id="1YNJ"/>
<dbReference type="PDBsum" id="1YNN"/>
<dbReference type="PDBsum" id="2GHO"/>
<dbReference type="PDBsum" id="4XLN"/>
<dbReference type="PDBsum" id="4XLP"/>
<dbReference type="PDBsum" id="4XLQ"/>
<dbReference type="PDBsum" id="4XLR"/>
<dbReference type="PDBsum" id="4XLS"/>
<dbReference type="PDBsum" id="5TJG"/>
<dbReference type="SMR" id="Q9KWU8"/>
<dbReference type="EvolutionaryTrace" id="Q9KWU8"/>
<dbReference type="GO" id="GO:0005737">
    <property type="term" value="C:cytoplasm"/>
    <property type="evidence" value="ECO:0007669"/>
    <property type="project" value="UniProtKB-ARBA"/>
</dbReference>
<dbReference type="GO" id="GO:0000428">
    <property type="term" value="C:DNA-directed RNA polymerase complex"/>
    <property type="evidence" value="ECO:0007669"/>
    <property type="project" value="UniProtKB-KW"/>
</dbReference>
<dbReference type="GO" id="GO:0003677">
    <property type="term" value="F:DNA binding"/>
    <property type="evidence" value="ECO:0007669"/>
    <property type="project" value="UniProtKB-UniRule"/>
</dbReference>
<dbReference type="GO" id="GO:0003899">
    <property type="term" value="F:DNA-directed RNA polymerase activity"/>
    <property type="evidence" value="ECO:0007669"/>
    <property type="project" value="UniProtKB-UniRule"/>
</dbReference>
<dbReference type="GO" id="GO:0046983">
    <property type="term" value="F:protein dimerization activity"/>
    <property type="evidence" value="ECO:0007669"/>
    <property type="project" value="InterPro"/>
</dbReference>
<dbReference type="GO" id="GO:0006351">
    <property type="term" value="P:DNA-templated transcription"/>
    <property type="evidence" value="ECO:0007669"/>
    <property type="project" value="UniProtKB-UniRule"/>
</dbReference>
<dbReference type="CDD" id="cd06928">
    <property type="entry name" value="RNAP_alpha_NTD"/>
    <property type="match status" value="1"/>
</dbReference>
<dbReference type="FunFam" id="2.170.120.12:FF:000001">
    <property type="entry name" value="DNA-directed RNA polymerase subunit alpha"/>
    <property type="match status" value="1"/>
</dbReference>
<dbReference type="Gene3D" id="1.10.150.20">
    <property type="entry name" value="5' to 3' exonuclease, C-terminal subdomain"/>
    <property type="match status" value="1"/>
</dbReference>
<dbReference type="Gene3D" id="2.170.120.12">
    <property type="entry name" value="DNA-directed RNA polymerase, insert domain"/>
    <property type="match status" value="1"/>
</dbReference>
<dbReference type="Gene3D" id="3.30.1360.10">
    <property type="entry name" value="RNA polymerase, RBP11-like subunit"/>
    <property type="match status" value="1"/>
</dbReference>
<dbReference type="HAMAP" id="MF_00059">
    <property type="entry name" value="RNApol_bact_RpoA"/>
    <property type="match status" value="1"/>
</dbReference>
<dbReference type="InterPro" id="IPR011262">
    <property type="entry name" value="DNA-dir_RNA_pol_insert"/>
</dbReference>
<dbReference type="InterPro" id="IPR011263">
    <property type="entry name" value="DNA-dir_RNA_pol_RpoA/D/Rpb3"/>
</dbReference>
<dbReference type="InterPro" id="IPR011773">
    <property type="entry name" value="DNA-dir_RpoA"/>
</dbReference>
<dbReference type="InterPro" id="IPR036603">
    <property type="entry name" value="RBP11-like"/>
</dbReference>
<dbReference type="InterPro" id="IPR011260">
    <property type="entry name" value="RNAP_asu_C"/>
</dbReference>
<dbReference type="InterPro" id="IPR036643">
    <property type="entry name" value="RNApol_insert_sf"/>
</dbReference>
<dbReference type="NCBIfam" id="NF003513">
    <property type="entry name" value="PRK05182.1-2"/>
    <property type="match status" value="1"/>
</dbReference>
<dbReference type="NCBIfam" id="NF003519">
    <property type="entry name" value="PRK05182.2-5"/>
    <property type="match status" value="1"/>
</dbReference>
<dbReference type="NCBIfam" id="TIGR02027">
    <property type="entry name" value="rpoA"/>
    <property type="match status" value="1"/>
</dbReference>
<dbReference type="Pfam" id="PF01000">
    <property type="entry name" value="RNA_pol_A_bac"/>
    <property type="match status" value="1"/>
</dbReference>
<dbReference type="Pfam" id="PF03118">
    <property type="entry name" value="RNA_pol_A_CTD"/>
    <property type="match status" value="1"/>
</dbReference>
<dbReference type="Pfam" id="PF01193">
    <property type="entry name" value="RNA_pol_L"/>
    <property type="match status" value="1"/>
</dbReference>
<dbReference type="SMART" id="SM00662">
    <property type="entry name" value="RPOLD"/>
    <property type="match status" value="1"/>
</dbReference>
<dbReference type="SUPFAM" id="SSF47789">
    <property type="entry name" value="C-terminal domain of RNA polymerase alpha subunit"/>
    <property type="match status" value="1"/>
</dbReference>
<dbReference type="SUPFAM" id="SSF56553">
    <property type="entry name" value="Insert subdomain of RNA polymerase alpha subunit"/>
    <property type="match status" value="1"/>
</dbReference>
<dbReference type="SUPFAM" id="SSF55257">
    <property type="entry name" value="RBP11-like subunits of RNA polymerase"/>
    <property type="match status" value="1"/>
</dbReference>
<gene>
    <name type="primary">rpoA</name>
</gene>
<sequence>MLESKLKAPVFTATTQGDHYGEFVLEPLERGFGVTLGNPLRRILLSSIPGTAVTSVYIEDVLHEFSTIPGVKEDVVEIILNLKELVVRFLDPKMASTTLILRAEGPKEVRAGDFTPSADVEIMNPDLHIATLEEGGKLYMEVRVDRGVGYVPAERHGIKDRINAIPVDAIFSPVRRVAFQVEDTRLGQRTDLDKLTLRIWTDGSVTPLEALNQAVAILKEHLNYFANPEASLLPTPEVSKGEKRESAEEDLDLPLEELGLSTRVLHSLKEEGIESVRALLALNLKDLRNIPGIGERSLEEIRQALAKKGFTLKE</sequence>
<keyword id="KW-0002">3D-structure</keyword>
<keyword id="KW-0240">DNA-directed RNA polymerase</keyword>
<keyword id="KW-0548">Nucleotidyltransferase</keyword>
<keyword id="KW-0804">Transcription</keyword>
<keyword id="KW-0808">Transferase</keyword>
<protein>
    <recommendedName>
        <fullName>DNA-directed RNA polymerase subunit alpha</fullName>
        <shortName>RNAP subunit alpha</shortName>
        <ecNumber>2.7.7.6</ecNumber>
    </recommendedName>
    <alternativeName>
        <fullName>RNA polymerase subunit alpha</fullName>
    </alternativeName>
    <alternativeName>
        <fullName>Transcriptase subunit alpha</fullName>
    </alternativeName>
</protein>
<organism>
    <name type="scientific">Thermus aquaticus</name>
    <dbReference type="NCBI Taxonomy" id="271"/>
    <lineage>
        <taxon>Bacteria</taxon>
        <taxon>Thermotogati</taxon>
        <taxon>Deinococcota</taxon>
        <taxon>Deinococci</taxon>
        <taxon>Thermales</taxon>
        <taxon>Thermaceae</taxon>
        <taxon>Thermus</taxon>
    </lineage>
</organism>
<comment type="function">
    <text>DNA-dependent RNA polymerase catalyzes the transcription of DNA into RNA using the four ribonucleoside triphosphates as substrates.</text>
</comment>
<comment type="catalytic activity">
    <reaction>
        <text>RNA(n) + a ribonucleoside 5'-triphosphate = RNA(n+1) + diphosphate</text>
        <dbReference type="Rhea" id="RHEA:21248"/>
        <dbReference type="Rhea" id="RHEA-COMP:14527"/>
        <dbReference type="Rhea" id="RHEA-COMP:17342"/>
        <dbReference type="ChEBI" id="CHEBI:33019"/>
        <dbReference type="ChEBI" id="CHEBI:61557"/>
        <dbReference type="ChEBI" id="CHEBI:140395"/>
        <dbReference type="EC" id="2.7.7.6"/>
    </reaction>
</comment>
<comment type="subunit">
    <text>Homodimer. The RNAP catalytic core consists of 2 alpha, 1 beta, 1 beta' and 1 omega subunit. When a sigma factor is associated with the core the holoenzyme is formed, which can initiate transcription.</text>
</comment>
<comment type="domain">
    <text evidence="1">The N-terminal domain is essential for RNAP assembly and basal transcription, whereas the C-terminal domain is involved in interaction with transcriptional regulators and with upstream promoter elements.</text>
</comment>
<comment type="similarity">
    <text evidence="2">Belongs to the RNA polymerase alpha chain family.</text>
</comment>
<reference key="1">
    <citation type="journal article" date="1999" name="Cell">
        <title>Crystal structure of Thermus aquaticus core RNA polymerase at 3.3 A resolution.</title>
        <authorList>
            <person name="Zhang G."/>
            <person name="Campbell E.A."/>
            <person name="Minakhin L."/>
            <person name="Richter C."/>
            <person name="Severinov K."/>
            <person name="Darst S.A."/>
        </authorList>
    </citation>
    <scope>NUCLEOTIDE SEQUENCE [GENOMIC DNA]</scope>
    <scope>X-RAY CRYSTALLOGRAPHY (3.3 ANGSTROMS)</scope>
</reference>
<accession>Q9KWU8</accession>